<reference evidence="8" key="1">
    <citation type="submission" date="2009-11" db="EMBL/GenBank/DDBJ databases">
        <authorList>
            <consortium name="Porcine genome sequencing project"/>
        </authorList>
    </citation>
    <scope>NUCLEOTIDE SEQUENCE [LARGE SCALE GENOMIC DNA]</scope>
    <source>
        <strain evidence="8">Duroc</strain>
    </source>
</reference>
<reference key="2">
    <citation type="journal article" date="1992" name="J. Protein Chem.">
        <title>The primary structure of elongation factor 1-beta from pig liver.</title>
        <authorList>
            <person name="Amons R."/>
            <person name="Schipper A."/>
            <person name="van Damme H.T.F."/>
            <person name="Kriek J."/>
            <person name="Moeller W."/>
        </authorList>
    </citation>
    <scope>PRELIMINARY PROTEIN SEQUENCE OF 2-225</scope>
    <source>
        <tissue>Liver</tissue>
    </source>
</reference>
<protein>
    <recommendedName>
        <fullName>Elongation factor 1-beta</fullName>
        <shortName>EF-1-beta</shortName>
    </recommendedName>
    <alternativeName>
        <fullName evidence="7">eEF-1B alpha</fullName>
    </alternativeName>
</protein>
<name>EF1B_PIG</name>
<keyword id="KW-0007">Acetylation</keyword>
<keyword id="KW-0903">Direct protein sequencing</keyword>
<keyword id="KW-0251">Elongation factor</keyword>
<keyword id="KW-1017">Isopeptide bond</keyword>
<keyword id="KW-0597">Phosphoprotein</keyword>
<keyword id="KW-0648">Protein biosynthesis</keyword>
<keyword id="KW-1185">Reference proteome</keyword>
<keyword id="KW-0832">Ubl conjugation</keyword>
<dbReference type="PIR" id="A61442">
    <property type="entry name" value="A61442"/>
</dbReference>
<dbReference type="RefSeq" id="NP_001230453.1">
    <property type="nucleotide sequence ID" value="NM_001243524.1"/>
</dbReference>
<dbReference type="FunCoup" id="P29412">
    <property type="interactions" value="482"/>
</dbReference>
<dbReference type="STRING" id="9823.ENSSSCP00000068654"/>
<dbReference type="PaxDb" id="9823-ENSSSCP00000017087"/>
<dbReference type="PeptideAtlas" id="P29412"/>
<dbReference type="Ensembl" id="ENSSSCT00000017560.4">
    <property type="protein sequence ID" value="ENSSSCP00000017087.2"/>
    <property type="gene ID" value="ENSSSCG00000016128.5"/>
</dbReference>
<dbReference type="Ensembl" id="ENSSSCT00085032065">
    <property type="protein sequence ID" value="ENSSSCP00085022207"/>
    <property type="gene ID" value="ENSSSCG00085016848"/>
</dbReference>
<dbReference type="Ensembl" id="ENSSSCT00090032351">
    <property type="protein sequence ID" value="ENSSSCP00090019941"/>
    <property type="gene ID" value="ENSSSCG00090018369"/>
</dbReference>
<dbReference type="Ensembl" id="ENSSSCT00105020399">
    <property type="protein sequence ID" value="ENSSSCP00105014711"/>
    <property type="gene ID" value="ENSSSCG00105010189"/>
</dbReference>
<dbReference type="Ensembl" id="ENSSSCT00110068343">
    <property type="protein sequence ID" value="ENSSSCP00110048122"/>
    <property type="gene ID" value="ENSSSCG00110035955"/>
</dbReference>
<dbReference type="Ensembl" id="ENSSSCT00115001027">
    <property type="protein sequence ID" value="ENSSSCP00115000958"/>
    <property type="gene ID" value="ENSSSCG00115000637"/>
</dbReference>
<dbReference type="Ensembl" id="ENSSSCT00130049171">
    <property type="protein sequence ID" value="ENSSSCP00130034790"/>
    <property type="gene ID" value="ENSSSCG00130025331"/>
</dbReference>
<dbReference type="GeneID" id="100154920"/>
<dbReference type="KEGG" id="ssc:100154920"/>
<dbReference type="CTD" id="1933"/>
<dbReference type="VGNC" id="VGNC:112739">
    <property type="gene designation" value="EEF1B2"/>
</dbReference>
<dbReference type="GeneTree" id="ENSGT00950000183014"/>
<dbReference type="HOGENOM" id="CLU_050172_0_0_1"/>
<dbReference type="InParanoid" id="P29412"/>
<dbReference type="OMA" id="YRWYKHI"/>
<dbReference type="OrthoDB" id="331763at2759"/>
<dbReference type="TreeFam" id="TF313134"/>
<dbReference type="Proteomes" id="UP000008227">
    <property type="component" value="Chromosome 15"/>
</dbReference>
<dbReference type="Proteomes" id="UP000314985">
    <property type="component" value="Unplaced"/>
</dbReference>
<dbReference type="Proteomes" id="UP000694570">
    <property type="component" value="Unplaced"/>
</dbReference>
<dbReference type="Proteomes" id="UP000694571">
    <property type="component" value="Unplaced"/>
</dbReference>
<dbReference type="Proteomes" id="UP000694720">
    <property type="component" value="Unplaced"/>
</dbReference>
<dbReference type="Proteomes" id="UP000694722">
    <property type="component" value="Unplaced"/>
</dbReference>
<dbReference type="Proteomes" id="UP000694723">
    <property type="component" value="Unplaced"/>
</dbReference>
<dbReference type="Proteomes" id="UP000694724">
    <property type="component" value="Unplaced"/>
</dbReference>
<dbReference type="Proteomes" id="UP000694725">
    <property type="component" value="Unplaced"/>
</dbReference>
<dbReference type="Proteomes" id="UP000694726">
    <property type="component" value="Unplaced"/>
</dbReference>
<dbReference type="Proteomes" id="UP000694727">
    <property type="component" value="Unplaced"/>
</dbReference>
<dbReference type="Proteomes" id="UP000694728">
    <property type="component" value="Unplaced"/>
</dbReference>
<dbReference type="GO" id="GO:0005829">
    <property type="term" value="C:cytosol"/>
    <property type="evidence" value="ECO:0000318"/>
    <property type="project" value="GO_Central"/>
</dbReference>
<dbReference type="GO" id="GO:0005853">
    <property type="term" value="C:eukaryotic translation elongation factor 1 complex"/>
    <property type="evidence" value="ECO:0007669"/>
    <property type="project" value="InterPro"/>
</dbReference>
<dbReference type="GO" id="GO:0005085">
    <property type="term" value="F:guanyl-nucleotide exchange factor activity"/>
    <property type="evidence" value="ECO:0000318"/>
    <property type="project" value="GO_Central"/>
</dbReference>
<dbReference type="GO" id="GO:0003746">
    <property type="term" value="F:translation elongation factor activity"/>
    <property type="evidence" value="ECO:0007669"/>
    <property type="project" value="UniProtKB-KW"/>
</dbReference>
<dbReference type="GO" id="GO:0006414">
    <property type="term" value="P:translational elongation"/>
    <property type="evidence" value="ECO:0000318"/>
    <property type="project" value="GO_Central"/>
</dbReference>
<dbReference type="CDD" id="cd00292">
    <property type="entry name" value="EF1B"/>
    <property type="match status" value="1"/>
</dbReference>
<dbReference type="FunFam" id="3.30.70.60:FF:000001">
    <property type="entry name" value="Elongation factor 1-beta 1 like"/>
    <property type="match status" value="1"/>
</dbReference>
<dbReference type="FunFam" id="1.20.1050.130:FF:000001">
    <property type="entry name" value="Putative Elongation factor 1-beta"/>
    <property type="match status" value="1"/>
</dbReference>
<dbReference type="Gene3D" id="3.30.70.60">
    <property type="match status" value="1"/>
</dbReference>
<dbReference type="InterPro" id="IPR036219">
    <property type="entry name" value="eEF-1beta-like_sf"/>
</dbReference>
<dbReference type="InterPro" id="IPR049720">
    <property type="entry name" value="EF1B_bsu/dsu"/>
</dbReference>
<dbReference type="InterPro" id="IPR014038">
    <property type="entry name" value="EF1B_bsu/dsu_GNE"/>
</dbReference>
<dbReference type="InterPro" id="IPR036282">
    <property type="entry name" value="Glutathione-S-Trfase_C_sf"/>
</dbReference>
<dbReference type="InterPro" id="IPR014717">
    <property type="entry name" value="Transl_elong_EF1B/ribsomal_bS6"/>
</dbReference>
<dbReference type="InterPro" id="IPR001326">
    <property type="entry name" value="Transl_elong_EF1B_B/D_CS"/>
</dbReference>
<dbReference type="PANTHER" id="PTHR11595">
    <property type="entry name" value="EF-HAND AND COILED-COIL DOMAIN-CONTAINING FAMILY MEMBER"/>
    <property type="match status" value="1"/>
</dbReference>
<dbReference type="PANTHER" id="PTHR11595:SF21">
    <property type="entry name" value="ELONGATION FACTOR 1-BETA"/>
    <property type="match status" value="1"/>
</dbReference>
<dbReference type="Pfam" id="PF00736">
    <property type="entry name" value="EF1_GNE"/>
    <property type="match status" value="1"/>
</dbReference>
<dbReference type="SMART" id="SM00888">
    <property type="entry name" value="EF1_GNE"/>
    <property type="match status" value="1"/>
</dbReference>
<dbReference type="SUPFAM" id="SSF54984">
    <property type="entry name" value="eEF-1beta-like"/>
    <property type="match status" value="1"/>
</dbReference>
<dbReference type="SUPFAM" id="SSF47616">
    <property type="entry name" value="GST C-terminal domain-like"/>
    <property type="match status" value="1"/>
</dbReference>
<dbReference type="PROSITE" id="PS00824">
    <property type="entry name" value="EF1BD_1"/>
    <property type="match status" value="1"/>
</dbReference>
<dbReference type="PROSITE" id="PS00825">
    <property type="entry name" value="EF1BD_2"/>
    <property type="match status" value="1"/>
</dbReference>
<organism>
    <name type="scientific">Sus scrofa</name>
    <name type="common">Pig</name>
    <dbReference type="NCBI Taxonomy" id="9823"/>
    <lineage>
        <taxon>Eukaryota</taxon>
        <taxon>Metazoa</taxon>
        <taxon>Chordata</taxon>
        <taxon>Craniata</taxon>
        <taxon>Vertebrata</taxon>
        <taxon>Euteleostomi</taxon>
        <taxon>Mammalia</taxon>
        <taxon>Eutheria</taxon>
        <taxon>Laurasiatheria</taxon>
        <taxon>Artiodactyla</taxon>
        <taxon>Suina</taxon>
        <taxon>Suidae</taxon>
        <taxon>Sus</taxon>
    </lineage>
</organism>
<feature type="chain" id="PRO_0000155024" description="Elongation factor 1-beta">
    <location>
        <begin position="1"/>
        <end position="225"/>
    </location>
</feature>
<feature type="domain" description="GST C-terminal" evidence="5">
    <location>
        <begin position="1"/>
        <end position="90"/>
    </location>
</feature>
<feature type="region of interest" description="Disordered" evidence="6">
    <location>
        <begin position="79"/>
        <end position="98"/>
    </location>
</feature>
<feature type="modified residue" description="N6-acetyllysine" evidence="3">
    <location>
        <position position="7"/>
    </location>
</feature>
<feature type="modified residue" description="Phosphoserine" evidence="3">
    <location>
        <position position="8"/>
    </location>
</feature>
<feature type="modified residue" description="Phosphoserine" evidence="3">
    <location>
        <position position="42"/>
    </location>
</feature>
<feature type="modified residue" description="Phosphothreonine" evidence="2">
    <location>
        <position position="88"/>
    </location>
</feature>
<feature type="modified residue" description="Phosphothreonine" evidence="3">
    <location>
        <position position="93"/>
    </location>
</feature>
<feature type="modified residue" description="Phosphoserine" evidence="3">
    <location>
        <position position="95"/>
    </location>
</feature>
<feature type="modified residue" description="Phosphoserine" evidence="3">
    <location>
        <position position="106"/>
    </location>
</feature>
<feature type="modified residue" description="Phosphoserine" evidence="3">
    <location>
        <position position="174"/>
    </location>
</feature>
<feature type="cross-link" description="Glycyl lysine isopeptide (Lys-Gly) (interchain with G-Cter in SUMO2)" evidence="3">
    <location>
        <position position="147"/>
    </location>
</feature>
<sequence>MGFGDLKSPAGLQVLNDYLADKSYIEGYVPSQADVAVFEAVSGPPPADLCHALRWYNHIKSYEKEKASLPGVKKALGKYGPANVEDTTESGATDSKDDDDIDLFGSDDEEESEEAKRLREERLAQYESKKAKKPALVAKSSILLDVKPWDDETDMAKLEECVRSIQADGLVWGSSKLVPVGYGIKKLQIQCVVEDDKVGTDMLEEQITAFEDYVQSMDVAAFNKI</sequence>
<proteinExistence type="evidence at protein level"/>
<comment type="function">
    <text evidence="4">Catalytic subunit of the guanine nucleotide exchange factor (GEF) (eEF1B subcomplex) of the eukaryotic elongation factor 1 complex (eEF1). Stimulates the exchange of GDP for GTP on elongation factor 1A (eEF1A), probably by displacing GDP from the nucleotide binding pocket in eEF1A.</text>
</comment>
<comment type="subunit">
    <text evidence="1 7">EF-1 is composed of 4 subunits: alpha, beta (alpha subunit of the eEF1B subcomplex), delta (beta subunit of the eEF1B subcomplex), and gamma (gamma subunit of the eEF1B subcomplex) (Probable). Interacts with elongation factor EEF1A1 (By similarity).</text>
</comment>
<comment type="similarity">
    <text evidence="7">Belongs to the EF-1-beta/EF-1-delta family.</text>
</comment>
<gene>
    <name type="primary">EEF1B</name>
</gene>
<accession>P29412</accession>
<accession>A0A4X1V2W3</accession>
<accession>F1SHD6</accession>
<accession>Q7M397</accession>
<evidence type="ECO:0000250" key="1">
    <source>
        <dbReference type="UniProtKB" id="A6IPG1"/>
    </source>
</evidence>
<evidence type="ECO:0000250" key="2">
    <source>
        <dbReference type="UniProtKB" id="O70251"/>
    </source>
</evidence>
<evidence type="ECO:0000250" key="3">
    <source>
        <dbReference type="UniProtKB" id="P24534"/>
    </source>
</evidence>
<evidence type="ECO:0000250" key="4">
    <source>
        <dbReference type="UniProtKB" id="P32471"/>
    </source>
</evidence>
<evidence type="ECO:0000255" key="5">
    <source>
        <dbReference type="PROSITE-ProRule" id="PRU00685"/>
    </source>
</evidence>
<evidence type="ECO:0000256" key="6">
    <source>
        <dbReference type="SAM" id="MobiDB-lite"/>
    </source>
</evidence>
<evidence type="ECO:0000305" key="7"/>
<evidence type="ECO:0000312" key="8">
    <source>
        <dbReference type="Proteomes" id="UP000008227"/>
    </source>
</evidence>